<reference key="1">
    <citation type="journal article" date="2003" name="Genome Res.">
        <title>Tropheryma whipplei twist: a human pathogenic Actinobacteria with a reduced genome.</title>
        <authorList>
            <person name="Raoult D."/>
            <person name="Ogata H."/>
            <person name="Audic S."/>
            <person name="Robert C."/>
            <person name="Suhre K."/>
            <person name="Drancourt M."/>
            <person name="Claverie J.-M."/>
        </authorList>
    </citation>
    <scope>NUCLEOTIDE SEQUENCE [LARGE SCALE GENOMIC DNA]</scope>
    <source>
        <strain>Twist</strain>
    </source>
</reference>
<evidence type="ECO:0000255" key="1">
    <source>
        <dbReference type="HAMAP-Rule" id="MF_00440"/>
    </source>
</evidence>
<gene>
    <name evidence="1" type="primary">nrdR</name>
    <name type="ordered locus">TWT_237</name>
</gene>
<accession>P67323</accession>
<accession>Q83HK7</accession>
<accession>Q83N05</accession>
<protein>
    <recommendedName>
        <fullName evidence="1">Transcriptional repressor NrdR</fullName>
    </recommendedName>
</protein>
<name>NRDR_TROWT</name>
<comment type="function">
    <text evidence="1">Negatively regulates transcription of bacterial ribonucleotide reductase nrd genes and operons by binding to NrdR-boxes.</text>
</comment>
<comment type="cofactor">
    <cofactor evidence="1">
        <name>Zn(2+)</name>
        <dbReference type="ChEBI" id="CHEBI:29105"/>
    </cofactor>
    <text evidence="1">Binds 1 zinc ion.</text>
</comment>
<comment type="similarity">
    <text evidence="1">Belongs to the NrdR family.</text>
</comment>
<feature type="chain" id="PRO_0000182376" description="Transcriptional repressor NrdR">
    <location>
        <begin position="1"/>
        <end position="147"/>
    </location>
</feature>
<feature type="domain" description="ATP-cone" evidence="1">
    <location>
        <begin position="46"/>
        <end position="136"/>
    </location>
</feature>
<feature type="zinc finger region" evidence="1">
    <location>
        <begin position="3"/>
        <end position="34"/>
    </location>
</feature>
<organism>
    <name type="scientific">Tropheryma whipplei (strain Twist)</name>
    <name type="common">Whipple's bacillus</name>
    <dbReference type="NCBI Taxonomy" id="203267"/>
    <lineage>
        <taxon>Bacteria</taxon>
        <taxon>Bacillati</taxon>
        <taxon>Actinomycetota</taxon>
        <taxon>Actinomycetes</taxon>
        <taxon>Micrococcales</taxon>
        <taxon>Tropherymataceae</taxon>
        <taxon>Tropheryma</taxon>
    </lineage>
</organism>
<proteinExistence type="inferred from homology"/>
<dbReference type="EMBL" id="AE014184">
    <property type="protein sequence ID" value="AAO44334.1"/>
    <property type="molecule type" value="Genomic_DNA"/>
</dbReference>
<dbReference type="RefSeq" id="WP_011096480.1">
    <property type="nucleotide sequence ID" value="NC_004572.3"/>
</dbReference>
<dbReference type="SMR" id="P67323"/>
<dbReference type="STRING" id="203267.TWT_237"/>
<dbReference type="GeneID" id="67388313"/>
<dbReference type="KEGG" id="twh:TWT_237"/>
<dbReference type="eggNOG" id="COG1327">
    <property type="taxonomic scope" value="Bacteria"/>
</dbReference>
<dbReference type="HOGENOM" id="CLU_108412_1_0_11"/>
<dbReference type="OrthoDB" id="9807461at2"/>
<dbReference type="Proteomes" id="UP000002200">
    <property type="component" value="Chromosome"/>
</dbReference>
<dbReference type="GO" id="GO:0005524">
    <property type="term" value="F:ATP binding"/>
    <property type="evidence" value="ECO:0007669"/>
    <property type="project" value="UniProtKB-KW"/>
</dbReference>
<dbReference type="GO" id="GO:0003677">
    <property type="term" value="F:DNA binding"/>
    <property type="evidence" value="ECO:0007669"/>
    <property type="project" value="UniProtKB-KW"/>
</dbReference>
<dbReference type="GO" id="GO:0008270">
    <property type="term" value="F:zinc ion binding"/>
    <property type="evidence" value="ECO:0007669"/>
    <property type="project" value="UniProtKB-UniRule"/>
</dbReference>
<dbReference type="GO" id="GO:0045892">
    <property type="term" value="P:negative regulation of DNA-templated transcription"/>
    <property type="evidence" value="ECO:0007669"/>
    <property type="project" value="UniProtKB-UniRule"/>
</dbReference>
<dbReference type="HAMAP" id="MF_00440">
    <property type="entry name" value="NrdR"/>
    <property type="match status" value="1"/>
</dbReference>
<dbReference type="InterPro" id="IPR005144">
    <property type="entry name" value="ATP-cone_dom"/>
</dbReference>
<dbReference type="InterPro" id="IPR055173">
    <property type="entry name" value="NrdR-like_N"/>
</dbReference>
<dbReference type="InterPro" id="IPR003796">
    <property type="entry name" value="RNR_NrdR-like"/>
</dbReference>
<dbReference type="NCBIfam" id="TIGR00244">
    <property type="entry name" value="transcriptional regulator NrdR"/>
    <property type="match status" value="1"/>
</dbReference>
<dbReference type="PANTHER" id="PTHR30455">
    <property type="entry name" value="TRANSCRIPTIONAL REPRESSOR NRDR"/>
    <property type="match status" value="1"/>
</dbReference>
<dbReference type="PANTHER" id="PTHR30455:SF2">
    <property type="entry name" value="TRANSCRIPTIONAL REPRESSOR NRDR"/>
    <property type="match status" value="1"/>
</dbReference>
<dbReference type="Pfam" id="PF03477">
    <property type="entry name" value="ATP-cone"/>
    <property type="match status" value="1"/>
</dbReference>
<dbReference type="Pfam" id="PF22811">
    <property type="entry name" value="Zn_ribbon_NrdR"/>
    <property type="match status" value="1"/>
</dbReference>
<dbReference type="PROSITE" id="PS51161">
    <property type="entry name" value="ATP_CONE"/>
    <property type="match status" value="1"/>
</dbReference>
<keyword id="KW-0067">ATP-binding</keyword>
<keyword id="KW-0238">DNA-binding</keyword>
<keyword id="KW-0479">Metal-binding</keyword>
<keyword id="KW-0547">Nucleotide-binding</keyword>
<keyword id="KW-1185">Reference proteome</keyword>
<keyword id="KW-0678">Repressor</keyword>
<keyword id="KW-0804">Transcription</keyword>
<keyword id="KW-0805">Transcription regulation</keyword>
<keyword id="KW-0862">Zinc</keyword>
<keyword id="KW-0863">Zinc-finger</keyword>
<sequence>MRCLFCRSDDTKVIDSRTSEDGISIRRRRECQLCKRRFSTLETASLTVIKRNGTSEPFRREKVVTGVHKACQGRPVTKADLAVLAQRVEESLRASGNSQVDSNDIGLAILPELLRLDQVAYIRFASVYQDFDSLEDFSRAVERLKNQ</sequence>